<evidence type="ECO:0000255" key="1">
    <source>
        <dbReference type="HAMAP-Rule" id="MF_00444"/>
    </source>
</evidence>
<name>CLPP_ALKEH</name>
<gene>
    <name evidence="1" type="primary">clpP</name>
    <name type="ordered locus">Mlg_2288</name>
</gene>
<feature type="chain" id="PRO_1000189630" description="ATP-dependent Clp protease proteolytic subunit">
    <location>
        <begin position="1"/>
        <end position="214"/>
    </location>
</feature>
<feature type="active site" description="Nucleophile" evidence="1">
    <location>
        <position position="113"/>
    </location>
</feature>
<feature type="active site" evidence="1">
    <location>
        <position position="138"/>
    </location>
</feature>
<organism>
    <name type="scientific">Alkalilimnicola ehrlichii (strain ATCC BAA-1101 / DSM 17681 / MLHE-1)</name>
    <dbReference type="NCBI Taxonomy" id="187272"/>
    <lineage>
        <taxon>Bacteria</taxon>
        <taxon>Pseudomonadati</taxon>
        <taxon>Pseudomonadota</taxon>
        <taxon>Gammaproteobacteria</taxon>
        <taxon>Chromatiales</taxon>
        <taxon>Ectothiorhodospiraceae</taxon>
        <taxon>Alkalilimnicola</taxon>
    </lineage>
</organism>
<protein>
    <recommendedName>
        <fullName evidence="1">ATP-dependent Clp protease proteolytic subunit</fullName>
        <ecNumber evidence="1">3.4.21.92</ecNumber>
    </recommendedName>
    <alternativeName>
        <fullName evidence="1">Endopeptidase Clp</fullName>
    </alternativeName>
</protein>
<proteinExistence type="inferred from homology"/>
<keyword id="KW-0963">Cytoplasm</keyword>
<keyword id="KW-0378">Hydrolase</keyword>
<keyword id="KW-0645">Protease</keyword>
<keyword id="KW-1185">Reference proteome</keyword>
<keyword id="KW-0720">Serine protease</keyword>
<dbReference type="EC" id="3.4.21.92" evidence="1"/>
<dbReference type="EMBL" id="CP000453">
    <property type="protein sequence ID" value="ABI57630.1"/>
    <property type="molecule type" value="Genomic_DNA"/>
</dbReference>
<dbReference type="RefSeq" id="WP_011630024.1">
    <property type="nucleotide sequence ID" value="NC_008340.1"/>
</dbReference>
<dbReference type="SMR" id="Q0A6A7"/>
<dbReference type="MEROPS" id="S14.001"/>
<dbReference type="KEGG" id="aeh:Mlg_2288"/>
<dbReference type="eggNOG" id="COG0740">
    <property type="taxonomic scope" value="Bacteria"/>
</dbReference>
<dbReference type="HOGENOM" id="CLU_058707_3_2_6"/>
<dbReference type="OrthoDB" id="9802800at2"/>
<dbReference type="Proteomes" id="UP000001962">
    <property type="component" value="Chromosome"/>
</dbReference>
<dbReference type="GO" id="GO:0005737">
    <property type="term" value="C:cytoplasm"/>
    <property type="evidence" value="ECO:0007669"/>
    <property type="project" value="UniProtKB-SubCell"/>
</dbReference>
<dbReference type="GO" id="GO:0009368">
    <property type="term" value="C:endopeptidase Clp complex"/>
    <property type="evidence" value="ECO:0007669"/>
    <property type="project" value="TreeGrafter"/>
</dbReference>
<dbReference type="GO" id="GO:0004176">
    <property type="term" value="F:ATP-dependent peptidase activity"/>
    <property type="evidence" value="ECO:0007669"/>
    <property type="project" value="InterPro"/>
</dbReference>
<dbReference type="GO" id="GO:0051117">
    <property type="term" value="F:ATPase binding"/>
    <property type="evidence" value="ECO:0007669"/>
    <property type="project" value="TreeGrafter"/>
</dbReference>
<dbReference type="GO" id="GO:0004252">
    <property type="term" value="F:serine-type endopeptidase activity"/>
    <property type="evidence" value="ECO:0007669"/>
    <property type="project" value="UniProtKB-UniRule"/>
</dbReference>
<dbReference type="GO" id="GO:0006515">
    <property type="term" value="P:protein quality control for misfolded or incompletely synthesized proteins"/>
    <property type="evidence" value="ECO:0007669"/>
    <property type="project" value="TreeGrafter"/>
</dbReference>
<dbReference type="CDD" id="cd07017">
    <property type="entry name" value="S14_ClpP_2"/>
    <property type="match status" value="1"/>
</dbReference>
<dbReference type="FunFam" id="3.90.226.10:FF:000001">
    <property type="entry name" value="ATP-dependent Clp protease proteolytic subunit"/>
    <property type="match status" value="1"/>
</dbReference>
<dbReference type="Gene3D" id="3.90.226.10">
    <property type="entry name" value="2-enoyl-CoA Hydratase, Chain A, domain 1"/>
    <property type="match status" value="1"/>
</dbReference>
<dbReference type="HAMAP" id="MF_00444">
    <property type="entry name" value="ClpP"/>
    <property type="match status" value="1"/>
</dbReference>
<dbReference type="InterPro" id="IPR001907">
    <property type="entry name" value="ClpP"/>
</dbReference>
<dbReference type="InterPro" id="IPR029045">
    <property type="entry name" value="ClpP/crotonase-like_dom_sf"/>
</dbReference>
<dbReference type="InterPro" id="IPR023562">
    <property type="entry name" value="ClpP/TepA"/>
</dbReference>
<dbReference type="InterPro" id="IPR033135">
    <property type="entry name" value="ClpP_His_AS"/>
</dbReference>
<dbReference type="InterPro" id="IPR018215">
    <property type="entry name" value="ClpP_Ser_AS"/>
</dbReference>
<dbReference type="NCBIfam" id="TIGR00493">
    <property type="entry name" value="clpP"/>
    <property type="match status" value="1"/>
</dbReference>
<dbReference type="NCBIfam" id="NF001368">
    <property type="entry name" value="PRK00277.1"/>
    <property type="match status" value="1"/>
</dbReference>
<dbReference type="NCBIfam" id="NF009205">
    <property type="entry name" value="PRK12553.1"/>
    <property type="match status" value="1"/>
</dbReference>
<dbReference type="PANTHER" id="PTHR10381">
    <property type="entry name" value="ATP-DEPENDENT CLP PROTEASE PROTEOLYTIC SUBUNIT"/>
    <property type="match status" value="1"/>
</dbReference>
<dbReference type="PANTHER" id="PTHR10381:SF70">
    <property type="entry name" value="ATP-DEPENDENT CLP PROTEASE PROTEOLYTIC SUBUNIT"/>
    <property type="match status" value="1"/>
</dbReference>
<dbReference type="Pfam" id="PF00574">
    <property type="entry name" value="CLP_protease"/>
    <property type="match status" value="1"/>
</dbReference>
<dbReference type="PRINTS" id="PR00127">
    <property type="entry name" value="CLPPROTEASEP"/>
</dbReference>
<dbReference type="SUPFAM" id="SSF52096">
    <property type="entry name" value="ClpP/crotonase"/>
    <property type="match status" value="1"/>
</dbReference>
<dbReference type="PROSITE" id="PS00382">
    <property type="entry name" value="CLP_PROTEASE_HIS"/>
    <property type="match status" value="1"/>
</dbReference>
<dbReference type="PROSITE" id="PS00381">
    <property type="entry name" value="CLP_PROTEASE_SER"/>
    <property type="match status" value="1"/>
</dbReference>
<sequence length="214" mass="23573">MSDERREGLAPEIEATGLVPMVVEQSARGERAYDIYSRLLKERVIFLVGPVEDHMANLIVAQLLFLESENPDKDIHIYINSPGGAVTAGLAIYDTMQFIKPDVSTVCIGQAASMGALLLTGGTKGKRYALPNSRMMIHQPLGGFQGQATDVDIHAREILDMRDRLNRIMAHHTGQDMETIARDTDRDNFMSPDTACEYGLVDAVLADRKALDQA</sequence>
<reference key="1">
    <citation type="submission" date="2006-08" db="EMBL/GenBank/DDBJ databases">
        <title>Complete sequence of Alkalilimnicola ehrilichei MLHE-1.</title>
        <authorList>
            <person name="Copeland A."/>
            <person name="Lucas S."/>
            <person name="Lapidus A."/>
            <person name="Barry K."/>
            <person name="Detter J.C."/>
            <person name="Glavina del Rio T."/>
            <person name="Hammon N."/>
            <person name="Israni S."/>
            <person name="Dalin E."/>
            <person name="Tice H."/>
            <person name="Pitluck S."/>
            <person name="Sims D."/>
            <person name="Brettin T."/>
            <person name="Bruce D."/>
            <person name="Han C."/>
            <person name="Tapia R."/>
            <person name="Gilna P."/>
            <person name="Schmutz J."/>
            <person name="Larimer F."/>
            <person name="Land M."/>
            <person name="Hauser L."/>
            <person name="Kyrpides N."/>
            <person name="Mikhailova N."/>
            <person name="Oremland R.S."/>
            <person name="Hoeft S.E."/>
            <person name="Switzer-Blum J."/>
            <person name="Kulp T."/>
            <person name="King G."/>
            <person name="Tabita R."/>
            <person name="Witte B."/>
            <person name="Santini J.M."/>
            <person name="Basu P."/>
            <person name="Hollibaugh J.T."/>
            <person name="Xie G."/>
            <person name="Stolz J.F."/>
            <person name="Richardson P."/>
        </authorList>
    </citation>
    <scope>NUCLEOTIDE SEQUENCE [LARGE SCALE GENOMIC DNA]</scope>
    <source>
        <strain>ATCC BAA-1101 / DSM 17681 / MLHE-1</strain>
    </source>
</reference>
<accession>Q0A6A7</accession>
<comment type="function">
    <text evidence="1">Cleaves peptides in various proteins in a process that requires ATP hydrolysis. Has a chymotrypsin-like activity. Plays a major role in the degradation of misfolded proteins.</text>
</comment>
<comment type="catalytic activity">
    <reaction evidence="1">
        <text>Hydrolysis of proteins to small peptides in the presence of ATP and magnesium. alpha-casein is the usual test substrate. In the absence of ATP, only oligopeptides shorter than five residues are hydrolyzed (such as succinyl-Leu-Tyr-|-NHMec, and Leu-Tyr-Leu-|-Tyr-Trp, in which cleavage of the -Tyr-|-Leu- and -Tyr-|-Trp bonds also occurs).</text>
        <dbReference type="EC" id="3.4.21.92"/>
    </reaction>
</comment>
<comment type="subunit">
    <text evidence="1">Fourteen ClpP subunits assemble into 2 heptameric rings which stack back to back to give a disk-like structure with a central cavity, resembling the structure of eukaryotic proteasomes.</text>
</comment>
<comment type="subcellular location">
    <subcellularLocation>
        <location evidence="1">Cytoplasm</location>
    </subcellularLocation>
</comment>
<comment type="similarity">
    <text evidence="1">Belongs to the peptidase S14 family.</text>
</comment>